<organism>
    <name type="scientific">Homo sapiens</name>
    <name type="common">Human</name>
    <dbReference type="NCBI Taxonomy" id="9606"/>
    <lineage>
        <taxon>Eukaryota</taxon>
        <taxon>Metazoa</taxon>
        <taxon>Chordata</taxon>
        <taxon>Craniata</taxon>
        <taxon>Vertebrata</taxon>
        <taxon>Euteleostomi</taxon>
        <taxon>Mammalia</taxon>
        <taxon>Eutheria</taxon>
        <taxon>Euarchontoglires</taxon>
        <taxon>Primates</taxon>
        <taxon>Haplorrhini</taxon>
        <taxon>Catarrhini</taxon>
        <taxon>Hominidae</taxon>
        <taxon>Homo</taxon>
    </lineage>
</organism>
<comment type="function">
    <text evidence="2">Shows chemotactic activity for monocytes, resting T-lymphocytes, and neutrophils, but not for activated lymphocytes. Inhibits proliferation of myeloid progenitor cells in colony formation assays. This protein can bind heparin. Binds CCR1. CCL23(19-99), CCL23(22-99), CCL23(27-99), CCL23(30-99) are more potent chemoattractants than CCL23.</text>
</comment>
<comment type="interaction">
    <interactant intactId="EBI-16805602">
        <id>P55773</id>
    </interactant>
    <interactant intactId="EBI-2556886">
        <id>P14735</id>
        <label>IDE</label>
    </interactant>
    <organismsDiffer>false</organismsDiffer>
    <experiments>2</experiments>
</comment>
<comment type="subcellular location">
    <subcellularLocation>
        <location>Secreted</location>
    </subcellularLocation>
</comment>
<comment type="alternative products">
    <event type="alternative splicing"/>
    <isoform>
        <id>P55773-1</id>
        <name>Short</name>
        <name>CKB-8</name>
        <sequence type="displayed"/>
    </isoform>
    <isoform>
        <id>P55773-2</id>
        <name>Long</name>
        <name>CKB-8-1</name>
        <sequence type="described" ref="VSP_001063"/>
    </isoform>
</comment>
<comment type="tissue specificity">
    <text evidence="2">High levels in adult lung, liver, skeletal muscle and pancreas. Moderate levels in fetal liver, adult bone marrow and placenta. The short form is the major species and the longer form was detected only in very low abundance. CCL23(19-99), CCL23(22-99), CCL23(27-99), CCL23(30-99) are found in high levels in synovial fluids from rheumatoid patients.</text>
</comment>
<comment type="PTM">
    <text evidence="2">The N-terminal is proteolytically cleaved by proteases associated with inflammatory responses. The processed forms, CCL23(19-99), CCL23(22-99), CCL23(27-99) and CCL23(30-99) exhibit increase in CCR1-mediated signaling and chemotaxis assays in vitro.</text>
</comment>
<comment type="similarity">
    <text evidence="6">Belongs to the intercrine beta (chemokine CC) family.</text>
</comment>
<comment type="online information" name="Wikipedia">
    <link uri="https://en.wikipedia.org/wiki/CCL23"/>
    <text>CCL23 entry</text>
</comment>
<accession>P55773</accession>
<accession>B7ZKQ3</accession>
<accession>O00174</accession>
<accession>O75950</accession>
<accession>Q52LD4</accession>
<protein>
    <recommendedName>
        <fullName>C-C motif chemokine 23</fullName>
    </recommendedName>
    <alternativeName>
        <fullName>CK-beta-8</fullName>
        <shortName>CKB-8</shortName>
    </alternativeName>
    <alternativeName>
        <fullName>Macrophage inflammatory protein 3</fullName>
        <shortName>MIP-3</shortName>
    </alternativeName>
    <alternativeName>
        <fullName>Myeloid progenitor inhibitory factor 1</fullName>
        <shortName>MPIF-1</shortName>
    </alternativeName>
    <alternativeName>
        <fullName>Small-inducible cytokine A23</fullName>
    </alternativeName>
    <component>
        <recommendedName>
            <fullName>CCL23(19-99)</fullName>
        </recommendedName>
    </component>
    <component>
        <recommendedName>
            <fullName>CCL23(22-99)</fullName>
        </recommendedName>
    </component>
    <component>
        <recommendedName>
            <fullName>CCL23(27-99)</fullName>
        </recommendedName>
    </component>
    <component>
        <recommendedName>
            <fullName>CCL23(30-99)</fullName>
        </recommendedName>
    </component>
</protein>
<evidence type="ECO:0000269" key="1">
    <source>
    </source>
</evidence>
<evidence type="ECO:0000269" key="2">
    <source>
    </source>
</evidence>
<evidence type="ECO:0000269" key="3">
    <source>
    </source>
</evidence>
<evidence type="ECO:0000303" key="4">
    <source>
    </source>
</evidence>
<evidence type="ECO:0000303" key="5">
    <source>
    </source>
</evidence>
<evidence type="ECO:0000305" key="6"/>
<evidence type="ECO:0007829" key="7">
    <source>
        <dbReference type="PDB" id="1G91"/>
    </source>
</evidence>
<name>CCL23_HUMAN</name>
<reference key="1">
    <citation type="patent" date="1996-04-02" number="US5504003">
        <title>Macrophage inflammatory protein-3 and -4.</title>
        <authorList>
            <person name="Li H."/>
            <person name="Ruben S."/>
        </authorList>
    </citation>
    <scope>NUCLEOTIDE SEQUENCE [MRNA]</scope>
</reference>
<reference key="2">
    <citation type="journal article" date="1997" name="J. Exp. Med.">
        <title>Molecular and functional characterization of two novel human C-C chemokines as inhibitors of two distinct classes of myeloid progenitors.</title>
        <authorList>
            <person name="Patel V.P."/>
            <person name="Kreider B.L."/>
            <person name="Li Y."/>
            <person name="Li H."/>
            <person name="Leung K."/>
            <person name="Salcedo T."/>
            <person name="Nardelli B."/>
            <person name="Pippalla V."/>
            <person name="Gentz S."/>
            <person name="Thotakura R."/>
            <person name="Parmelee D."/>
            <person name="Gentz R."/>
            <person name="Garotta G."/>
        </authorList>
    </citation>
    <scope>NUCLEOTIDE SEQUENCE [MRNA] (ISOFORM SHORT)</scope>
    <scope>PROTEIN SEQUENCE OF 22-36</scope>
    <source>
        <tissue>Aortic endothelium</tissue>
    </source>
</reference>
<reference key="3">
    <citation type="journal article" date="1998" name="Blood">
        <title>Characterization of CKbeta8 and CKbeta8-1: two alternatively spliced forms of human beta-chemokine, chemoattractants for neutrophils, monocytes, and lymphocytes, and potent agonists at CC chemokine receptor 1.</title>
        <authorList>
            <person name="Youn B.-S."/>
            <person name="Zhang S.M."/>
            <person name="Broxmeyer H.E."/>
            <person name="Cooper S."/>
            <person name="Antol K."/>
            <person name="Fraser M. Jr."/>
            <person name="Kwon B.S."/>
        </authorList>
    </citation>
    <scope>NUCLEOTIDE SEQUENCE [MRNA] (ISOFORMS SHORT AND LONG)</scope>
    <scope>ALTERNATIVE SPLICING</scope>
    <source>
        <tissue>Monocyte</tissue>
    </source>
</reference>
<reference key="4">
    <citation type="journal article" date="1999" name="J. Interferon Cytokine Res.">
        <title>Organization of the chemokine gene cluster on human chromosome 17q11.2 containing the genes for CC chemokine MPIF-1, HCC-2, LEC, and RANTES.</title>
        <authorList>
            <person name="Nomiyama H."/>
            <person name="Fukuda S."/>
            <person name="Iio M."/>
            <person name="Tanase S."/>
            <person name="Miura R."/>
            <person name="Yoshie O."/>
        </authorList>
    </citation>
    <scope>NUCLEOTIDE SEQUENCE [GENOMIC DNA]</scope>
    <scope>ALTERNATIVE SPLICING</scope>
</reference>
<reference key="5">
    <citation type="journal article" date="2006" name="Nature">
        <title>DNA sequence of human chromosome 17 and analysis of rearrangement in the human lineage.</title>
        <authorList>
            <person name="Zody M.C."/>
            <person name="Garber M."/>
            <person name="Adams D.J."/>
            <person name="Sharpe T."/>
            <person name="Harrow J."/>
            <person name="Lupski J.R."/>
            <person name="Nicholson C."/>
            <person name="Searle S.M."/>
            <person name="Wilming L."/>
            <person name="Young S.K."/>
            <person name="Abouelleil A."/>
            <person name="Allen N.R."/>
            <person name="Bi W."/>
            <person name="Bloom T."/>
            <person name="Borowsky M.L."/>
            <person name="Bugalter B.E."/>
            <person name="Butler J."/>
            <person name="Chang J.L."/>
            <person name="Chen C.-K."/>
            <person name="Cook A."/>
            <person name="Corum B."/>
            <person name="Cuomo C.A."/>
            <person name="de Jong P.J."/>
            <person name="DeCaprio D."/>
            <person name="Dewar K."/>
            <person name="FitzGerald M."/>
            <person name="Gilbert J."/>
            <person name="Gibson R."/>
            <person name="Gnerre S."/>
            <person name="Goldstein S."/>
            <person name="Grafham D.V."/>
            <person name="Grocock R."/>
            <person name="Hafez N."/>
            <person name="Hagopian D.S."/>
            <person name="Hart E."/>
            <person name="Norman C.H."/>
            <person name="Humphray S."/>
            <person name="Jaffe D.B."/>
            <person name="Jones M."/>
            <person name="Kamal M."/>
            <person name="Khodiyar V.K."/>
            <person name="LaButti K."/>
            <person name="Laird G."/>
            <person name="Lehoczky J."/>
            <person name="Liu X."/>
            <person name="Lokyitsang T."/>
            <person name="Loveland J."/>
            <person name="Lui A."/>
            <person name="Macdonald P."/>
            <person name="Major J.E."/>
            <person name="Matthews L."/>
            <person name="Mauceli E."/>
            <person name="McCarroll S.A."/>
            <person name="Mihalev A.H."/>
            <person name="Mudge J."/>
            <person name="Nguyen C."/>
            <person name="Nicol R."/>
            <person name="O'Leary S.B."/>
            <person name="Osoegawa K."/>
            <person name="Schwartz D.C."/>
            <person name="Shaw-Smith C."/>
            <person name="Stankiewicz P."/>
            <person name="Steward C."/>
            <person name="Swarbreck D."/>
            <person name="Venkataraman V."/>
            <person name="Whittaker C.A."/>
            <person name="Yang X."/>
            <person name="Zimmer A.R."/>
            <person name="Bradley A."/>
            <person name="Hubbard T."/>
            <person name="Birren B.W."/>
            <person name="Rogers J."/>
            <person name="Lander E.S."/>
            <person name="Nusbaum C."/>
        </authorList>
    </citation>
    <scope>NUCLEOTIDE SEQUENCE [LARGE SCALE GENOMIC DNA]</scope>
</reference>
<reference key="6">
    <citation type="submission" date="2005-09" db="EMBL/GenBank/DDBJ databases">
        <authorList>
            <person name="Mural R.J."/>
            <person name="Istrail S."/>
            <person name="Sutton G.G."/>
            <person name="Florea L."/>
            <person name="Halpern A.L."/>
            <person name="Mobarry C.M."/>
            <person name="Lippert R."/>
            <person name="Walenz B."/>
            <person name="Shatkay H."/>
            <person name="Dew I."/>
            <person name="Miller J.R."/>
            <person name="Flanigan M.J."/>
            <person name="Edwards N.J."/>
            <person name="Bolanos R."/>
            <person name="Fasulo D."/>
            <person name="Halldorsson B.V."/>
            <person name="Hannenhalli S."/>
            <person name="Turner R."/>
            <person name="Yooseph S."/>
            <person name="Lu F."/>
            <person name="Nusskern D.R."/>
            <person name="Shue B.C."/>
            <person name="Zheng X.H."/>
            <person name="Zhong F."/>
            <person name="Delcher A.L."/>
            <person name="Huson D.H."/>
            <person name="Kravitz S.A."/>
            <person name="Mouchard L."/>
            <person name="Reinert K."/>
            <person name="Remington K.A."/>
            <person name="Clark A.G."/>
            <person name="Waterman M.S."/>
            <person name="Eichler E.E."/>
            <person name="Adams M.D."/>
            <person name="Hunkapiller M.W."/>
            <person name="Myers E.W."/>
            <person name="Venter J.C."/>
        </authorList>
    </citation>
    <scope>NUCLEOTIDE SEQUENCE [LARGE SCALE GENOMIC DNA]</scope>
</reference>
<reference key="7">
    <citation type="journal article" date="2004" name="Genome Res.">
        <title>The status, quality, and expansion of the NIH full-length cDNA project: the Mammalian Gene Collection (MGC).</title>
        <authorList>
            <consortium name="The MGC Project Team"/>
        </authorList>
    </citation>
    <scope>NUCLEOTIDE SEQUENCE [LARGE SCALE MRNA] (ISOFORMS LONG AND SHORT)</scope>
    <source>
        <tissue>Liver</tissue>
    </source>
</reference>
<reference key="8">
    <citation type="journal article" date="1997" name="J. Leukoc. Biol.">
        <title>The chemokine information source: identification and characterization of novel chemokines using the WorldWideWeb and expressed sequence tag databases.</title>
        <authorList>
            <person name="Wells T.N.C."/>
            <person name="Peitsch M.C."/>
        </authorList>
    </citation>
    <scope>DISCUSSION OF SEQUENCE</scope>
</reference>
<reference key="9">
    <citation type="journal article" date="2005" name="J. Immunol.">
        <title>Proteolytic activation of alternative CCR1 ligands in inflammation.</title>
        <authorList>
            <person name="Berahovich R.D."/>
            <person name="Miao Z."/>
            <person name="Wang Y."/>
            <person name="Premack B."/>
            <person name="Howard M.C."/>
            <person name="Schall T.J."/>
        </authorList>
    </citation>
    <scope>IDENTIFICATION OF CCL23(19-99); CCL23(22-99); CCL23(27-99) AND CCL23(30-99)</scope>
    <scope>PROTEOLYTIC PROCESSING OF N-TERMINUS</scope>
    <scope>TISSUE SPECIFICITY</scope>
    <scope>FUNCTION</scope>
</reference>
<reference key="10">
    <citation type="journal article" date="2001" name="J. Biol. Chem.">
        <title>Solution structure and dynamics of myeloid progenitor inhibitory factor-1 (MPIF-1), a novel monomeric CC chemokine.</title>
        <authorList>
            <person name="Rajarathnam K."/>
            <person name="Li Y."/>
            <person name="Rohrer T."/>
            <person name="Gentz R."/>
        </authorList>
    </citation>
    <scope>STRUCTURE BY NMR OF 45-120</scope>
    <scope>DISULFIDE BOND</scope>
</reference>
<feature type="signal peptide" evidence="3">
    <location>
        <begin position="1"/>
        <end position="21"/>
    </location>
</feature>
<feature type="chain" id="PRO_0000005229" description="C-C motif chemokine 23">
    <location>
        <begin position="22"/>
        <end position="120"/>
    </location>
</feature>
<feature type="chain" id="PRO_0000041847" description="CCL23(19-99)" evidence="2">
    <location>
        <begin position="40"/>
        <end position="120"/>
    </location>
</feature>
<feature type="chain" id="PRO_0000041848" description="CCL23(22-99)" evidence="2">
    <location>
        <begin position="43"/>
        <end position="120"/>
    </location>
</feature>
<feature type="chain" id="PRO_0000041849" description="CCL23(27-99)" evidence="2">
    <location>
        <begin position="48"/>
        <end position="120"/>
    </location>
</feature>
<feature type="chain" id="PRO_0000041850" description="CCL23(30-99)" evidence="2">
    <location>
        <begin position="51"/>
        <end position="120"/>
    </location>
</feature>
<feature type="disulfide bond" evidence="1">
    <location>
        <begin position="54"/>
        <end position="78"/>
    </location>
</feature>
<feature type="disulfide bond" evidence="1">
    <location>
        <begin position="55"/>
        <end position="94"/>
    </location>
</feature>
<feature type="disulfide bond" evidence="1">
    <location>
        <begin position="65"/>
        <end position="105"/>
    </location>
</feature>
<feature type="splice variant" id="VSP_001063" description="In isoform Long." evidence="4 5">
    <original>R</original>
    <variation>MLWRRKIGPQMTLSHAAG</variation>
    <location>
        <position position="46"/>
    </location>
</feature>
<feature type="sequence variant" id="VAR_011916" description="In dbSNP:rs1003645.">
    <original>M</original>
    <variation>V</variation>
    <location>
        <position position="106"/>
    </location>
</feature>
<feature type="sequence conflict" description="In Ref. 1." evidence="6" ref="1">
    <original>MLVTALGSQARVTKDAETEFMMSKLPLENPVLL</original>
    <variation>HAFLLPLVPGPGHKRCRDRVHECQSFHWKIQYFW</variation>
    <location>
        <begin position="12"/>
        <end position="44"/>
    </location>
</feature>
<feature type="strand" evidence="7">
    <location>
        <begin position="48"/>
        <end position="50"/>
    </location>
</feature>
<feature type="helix" evidence="7">
    <location>
        <begin position="65"/>
        <end position="67"/>
    </location>
</feature>
<feature type="strand" evidence="7">
    <location>
        <begin position="70"/>
        <end position="73"/>
    </location>
</feature>
<feature type="strand" evidence="7">
    <location>
        <begin position="78"/>
        <end position="80"/>
    </location>
</feature>
<feature type="strand" evidence="7">
    <location>
        <begin position="83"/>
        <end position="86"/>
    </location>
</feature>
<feature type="strand" evidence="7">
    <location>
        <begin position="92"/>
        <end position="95"/>
    </location>
</feature>
<feature type="helix" evidence="7">
    <location>
        <begin position="100"/>
        <end position="109"/>
    </location>
</feature>
<feature type="turn" evidence="7">
    <location>
        <begin position="113"/>
        <end position="115"/>
    </location>
</feature>
<proteinExistence type="evidence at protein level"/>
<dbReference type="EMBL" id="U85767">
    <property type="protein sequence ID" value="AAB51134.1"/>
    <property type="molecule type" value="mRNA"/>
</dbReference>
<dbReference type="EMBL" id="U58913">
    <property type="protein sequence ID" value="AAD10846.1"/>
    <property type="molecule type" value="mRNA"/>
</dbReference>
<dbReference type="EMBL" id="U67128">
    <property type="protein sequence ID" value="AAD00161.1"/>
    <property type="molecule type" value="mRNA"/>
</dbReference>
<dbReference type="EMBL" id="AF088219">
    <property type="protein sequence ID" value="AAC63326.1"/>
    <property type="molecule type" value="Genomic_DNA"/>
</dbReference>
<dbReference type="EMBL" id="AF088219">
    <property type="protein sequence ID" value="AAC63327.1"/>
    <property type="molecule type" value="Genomic_DNA"/>
</dbReference>
<dbReference type="EMBL" id="AC244100">
    <property type="status" value="NOT_ANNOTATED_CDS"/>
    <property type="molecule type" value="Genomic_DNA"/>
</dbReference>
<dbReference type="EMBL" id="CH471147">
    <property type="protein sequence ID" value="EAW80103.1"/>
    <property type="molecule type" value="Genomic_DNA"/>
</dbReference>
<dbReference type="EMBL" id="BC093970">
    <property type="protein sequence ID" value="AAH93970.1"/>
    <property type="molecule type" value="mRNA"/>
</dbReference>
<dbReference type="EMBL" id="BC143310">
    <property type="protein sequence ID" value="AAI43311.1"/>
    <property type="molecule type" value="mRNA"/>
</dbReference>
<dbReference type="CCDS" id="CCDS11305.1">
    <molecule id="P55773-2"/>
</dbReference>
<dbReference type="CCDS" id="CCDS59282.1">
    <molecule id="P55773-1"/>
</dbReference>
<dbReference type="RefSeq" id="NP_005055.3">
    <molecule id="P55773-2"/>
    <property type="nucleotide sequence ID" value="NM_005064.5"/>
</dbReference>
<dbReference type="RefSeq" id="NP_665905.2">
    <molecule id="P55773-1"/>
    <property type="nucleotide sequence ID" value="NM_145898.4"/>
</dbReference>
<dbReference type="PDB" id="1G91">
    <property type="method" value="NMR"/>
    <property type="chains" value="A=45-120"/>
</dbReference>
<dbReference type="PDBsum" id="1G91"/>
<dbReference type="SMR" id="P55773"/>
<dbReference type="BioGRID" id="112271">
    <property type="interactions" value="4"/>
</dbReference>
<dbReference type="FunCoup" id="P55773">
    <property type="interactions" value="608"/>
</dbReference>
<dbReference type="IntAct" id="P55773">
    <property type="interactions" value="2"/>
</dbReference>
<dbReference type="STRING" id="9606.ENSP00000481357"/>
<dbReference type="PhosphoSitePlus" id="P55773"/>
<dbReference type="BioMuta" id="CCL23"/>
<dbReference type="DMDM" id="308153623"/>
<dbReference type="MassIVE" id="P55773"/>
<dbReference type="PeptideAtlas" id="P55773"/>
<dbReference type="ProteomicsDB" id="56861">
    <molecule id="P55773-1"/>
</dbReference>
<dbReference type="ProteomicsDB" id="56862">
    <molecule id="P55773-2"/>
</dbReference>
<dbReference type="Antibodypedia" id="73206">
    <property type="antibodies" value="323 antibodies from 32 providers"/>
</dbReference>
<dbReference type="DNASU" id="6368"/>
<dbReference type="Ensembl" id="ENST00000610342.2">
    <property type="protein sequence ID" value="ENSP00000483546.1"/>
    <property type="gene ID" value="ENSG00000276114.2"/>
</dbReference>
<dbReference type="Ensembl" id="ENST00000612516.4">
    <molecule id="P55773-1"/>
    <property type="protein sequence ID" value="ENSP00000484748.1"/>
    <property type="gene ID" value="ENSG00000274736.5"/>
</dbReference>
<dbReference type="Ensembl" id="ENST00000615050.2">
    <molecule id="P55773-2"/>
    <property type="protein sequence ID" value="ENSP00000481357.1"/>
    <property type="gene ID" value="ENSG00000274736.5"/>
</dbReference>
<dbReference type="Ensembl" id="ENST00000632633.1">
    <property type="protein sequence ID" value="ENSP00000488270.1"/>
    <property type="gene ID" value="ENSG00000276114.2"/>
</dbReference>
<dbReference type="GeneID" id="6368"/>
<dbReference type="KEGG" id="hsa:6368"/>
<dbReference type="MANE-Select" id="ENST00000615050.2">
    <molecule id="P55773-2"/>
    <property type="protein sequence ID" value="ENSP00000481357.1"/>
    <property type="RefSeq nucleotide sequence ID" value="NM_005064.6"/>
    <property type="RefSeq protein sequence ID" value="NP_005055.3"/>
</dbReference>
<dbReference type="UCSC" id="uc002hks.3">
    <molecule id="P55773-1"/>
    <property type="organism name" value="human"/>
</dbReference>
<dbReference type="AGR" id="HGNC:10622"/>
<dbReference type="CTD" id="6368"/>
<dbReference type="DisGeNET" id="6368"/>
<dbReference type="GeneCards" id="CCL23"/>
<dbReference type="HGNC" id="HGNC:10622">
    <property type="gene designation" value="CCL23"/>
</dbReference>
<dbReference type="HPA" id="ENSG00000274736">
    <property type="expression patterns" value="Low tissue specificity"/>
</dbReference>
<dbReference type="MIM" id="602494">
    <property type="type" value="gene"/>
</dbReference>
<dbReference type="neXtProt" id="NX_P55773"/>
<dbReference type="OpenTargets" id="ENSG00000274736"/>
<dbReference type="PharmGKB" id="PA35554"/>
<dbReference type="VEuPathDB" id="HostDB:ENSG00000274736"/>
<dbReference type="GeneTree" id="ENSGT01100000263482"/>
<dbReference type="HOGENOM" id="CLU_141716_4_1_1"/>
<dbReference type="InParanoid" id="P55773"/>
<dbReference type="OMA" id="KIGPQMT"/>
<dbReference type="OrthoDB" id="9447832at2759"/>
<dbReference type="PAN-GO" id="P55773">
    <property type="GO annotations" value="14 GO annotations based on evolutionary models"/>
</dbReference>
<dbReference type="PhylomeDB" id="P55773"/>
<dbReference type="TreeFam" id="TF334888"/>
<dbReference type="PathwayCommons" id="P55773"/>
<dbReference type="Reactome" id="R-HSA-416476">
    <molecule id="P55773-2"/>
    <property type="pathway name" value="G alpha (q) signalling events"/>
</dbReference>
<dbReference type="Reactome" id="R-HSA-418594">
    <molecule id="P55773-2"/>
    <property type="pathway name" value="G alpha (i) signalling events"/>
</dbReference>
<dbReference type="Reactome" id="R-HSA-444473">
    <molecule id="P55773-2"/>
    <property type="pathway name" value="Formyl peptide receptors bind formyl peptides and many other ligands"/>
</dbReference>
<dbReference type="SignaLink" id="P55773"/>
<dbReference type="BioGRID-ORCS" id="6368">
    <property type="hits" value="13 hits in 1136 CRISPR screens"/>
</dbReference>
<dbReference type="EvolutionaryTrace" id="P55773"/>
<dbReference type="GenomeRNAi" id="6368"/>
<dbReference type="Pharos" id="P55773">
    <property type="development level" value="Tbio"/>
</dbReference>
<dbReference type="PRO" id="PR:P55773"/>
<dbReference type="Proteomes" id="UP000005640">
    <property type="component" value="Chromosome 17"/>
</dbReference>
<dbReference type="RNAct" id="P55773">
    <property type="molecule type" value="protein"/>
</dbReference>
<dbReference type="Bgee" id="ENSG00000274736">
    <property type="expression patterns" value="Expressed in male germ line stem cell (sensu Vertebrata) in testis and 85 other cell types or tissues"/>
</dbReference>
<dbReference type="ExpressionAtlas" id="P55773">
    <property type="expression patterns" value="baseline and differential"/>
</dbReference>
<dbReference type="GO" id="GO:0005576">
    <property type="term" value="C:extracellular region"/>
    <property type="evidence" value="ECO:0000304"/>
    <property type="project" value="Reactome"/>
</dbReference>
<dbReference type="GO" id="GO:0005615">
    <property type="term" value="C:extracellular space"/>
    <property type="evidence" value="ECO:0000318"/>
    <property type="project" value="GO_Central"/>
</dbReference>
<dbReference type="GO" id="GO:0048020">
    <property type="term" value="F:CCR chemokine receptor binding"/>
    <property type="evidence" value="ECO:0000318"/>
    <property type="project" value="GO_Central"/>
</dbReference>
<dbReference type="GO" id="GO:0031726">
    <property type="term" value="F:CCR1 chemokine receptor binding"/>
    <property type="evidence" value="ECO:0000353"/>
    <property type="project" value="UniProtKB"/>
</dbReference>
<dbReference type="GO" id="GO:0008009">
    <property type="term" value="F:chemokine activity"/>
    <property type="evidence" value="ECO:0000314"/>
    <property type="project" value="UniProtKB"/>
</dbReference>
<dbReference type="GO" id="GO:0008201">
    <property type="term" value="F:heparin binding"/>
    <property type="evidence" value="ECO:0007669"/>
    <property type="project" value="UniProtKB-KW"/>
</dbReference>
<dbReference type="GO" id="GO:0061844">
    <property type="term" value="P:antimicrobial humoral immune response mediated by antimicrobial peptide"/>
    <property type="evidence" value="ECO:0000318"/>
    <property type="project" value="GO_Central"/>
</dbReference>
<dbReference type="GO" id="GO:0060326">
    <property type="term" value="P:cell chemotaxis"/>
    <property type="evidence" value="ECO:0000318"/>
    <property type="project" value="GO_Central"/>
</dbReference>
<dbReference type="GO" id="GO:0007267">
    <property type="term" value="P:cell-cell signaling"/>
    <property type="evidence" value="ECO:0000304"/>
    <property type="project" value="ProtInc"/>
</dbReference>
<dbReference type="GO" id="GO:0070098">
    <property type="term" value="P:chemokine-mediated signaling pathway"/>
    <property type="evidence" value="ECO:0000318"/>
    <property type="project" value="GO_Central"/>
</dbReference>
<dbReference type="GO" id="GO:0006935">
    <property type="term" value="P:chemotaxis"/>
    <property type="evidence" value="ECO:0000304"/>
    <property type="project" value="ProtInc"/>
</dbReference>
<dbReference type="GO" id="GO:0007186">
    <property type="term" value="P:G protein-coupled receptor signaling pathway"/>
    <property type="evidence" value="ECO:0000304"/>
    <property type="project" value="ProtInc"/>
</dbReference>
<dbReference type="GO" id="GO:0006955">
    <property type="term" value="P:immune response"/>
    <property type="evidence" value="ECO:0000304"/>
    <property type="project" value="ProtInc"/>
</dbReference>
<dbReference type="GO" id="GO:0006954">
    <property type="term" value="P:inflammatory response"/>
    <property type="evidence" value="ECO:0000318"/>
    <property type="project" value="GO_Central"/>
</dbReference>
<dbReference type="GO" id="GO:0006874">
    <property type="term" value="P:intracellular calcium ion homeostasis"/>
    <property type="evidence" value="ECO:0000304"/>
    <property type="project" value="ProtInc"/>
</dbReference>
<dbReference type="GO" id="GO:0002548">
    <property type="term" value="P:monocyte chemotaxis"/>
    <property type="evidence" value="ECO:0000305"/>
    <property type="project" value="UniProtKB"/>
</dbReference>
<dbReference type="GO" id="GO:0008285">
    <property type="term" value="P:negative regulation of cell population proliferation"/>
    <property type="evidence" value="ECO:0000304"/>
    <property type="project" value="ProtInc"/>
</dbReference>
<dbReference type="GO" id="GO:0030335">
    <property type="term" value="P:positive regulation of cell migration"/>
    <property type="evidence" value="ECO:0000318"/>
    <property type="project" value="GO_Central"/>
</dbReference>
<dbReference type="GO" id="GO:0007165">
    <property type="term" value="P:signal transduction"/>
    <property type="evidence" value="ECO:0000303"/>
    <property type="project" value="ProtInc"/>
</dbReference>
<dbReference type="CDD" id="cd00272">
    <property type="entry name" value="Chemokine_CC"/>
    <property type="match status" value="1"/>
</dbReference>
<dbReference type="FunFam" id="2.40.50.40:FF:000002">
    <property type="entry name" value="C-C motif chemokine"/>
    <property type="match status" value="1"/>
</dbReference>
<dbReference type="Gene3D" id="2.40.50.40">
    <property type="match status" value="1"/>
</dbReference>
<dbReference type="InterPro" id="IPR039809">
    <property type="entry name" value="Chemokine_b/g/d"/>
</dbReference>
<dbReference type="InterPro" id="IPR000827">
    <property type="entry name" value="Chemokine_CC_CS"/>
</dbReference>
<dbReference type="InterPro" id="IPR001811">
    <property type="entry name" value="Chemokine_IL8-like_dom"/>
</dbReference>
<dbReference type="InterPro" id="IPR036048">
    <property type="entry name" value="Interleukin_8-like_sf"/>
</dbReference>
<dbReference type="PANTHER" id="PTHR12015:SF157">
    <property type="entry name" value="C-C MOTIF CHEMOKINE 23"/>
    <property type="match status" value="1"/>
</dbReference>
<dbReference type="PANTHER" id="PTHR12015">
    <property type="entry name" value="SMALL INDUCIBLE CYTOKINE A"/>
    <property type="match status" value="1"/>
</dbReference>
<dbReference type="Pfam" id="PF00048">
    <property type="entry name" value="IL8"/>
    <property type="match status" value="1"/>
</dbReference>
<dbReference type="SMART" id="SM00199">
    <property type="entry name" value="SCY"/>
    <property type="match status" value="1"/>
</dbReference>
<dbReference type="SUPFAM" id="SSF54117">
    <property type="entry name" value="Interleukin 8-like chemokines"/>
    <property type="match status" value="1"/>
</dbReference>
<dbReference type="PROSITE" id="PS00472">
    <property type="entry name" value="SMALL_CYTOKINES_CC"/>
    <property type="match status" value="1"/>
</dbReference>
<keyword id="KW-0002">3D-structure</keyword>
<keyword id="KW-0025">Alternative splicing</keyword>
<keyword id="KW-0145">Chemotaxis</keyword>
<keyword id="KW-0202">Cytokine</keyword>
<keyword id="KW-0903">Direct protein sequencing</keyword>
<keyword id="KW-1015">Disulfide bond</keyword>
<keyword id="KW-0358">Heparin-binding</keyword>
<keyword id="KW-0395">Inflammatory response</keyword>
<keyword id="KW-1267">Proteomics identification</keyword>
<keyword id="KW-1185">Reference proteome</keyword>
<keyword id="KW-0964">Secreted</keyword>
<keyword id="KW-0732">Signal</keyword>
<gene>
    <name type="primary">CCL23</name>
    <name type="synonym">MIP3</name>
    <name type="synonym">MPIF1</name>
    <name type="synonym">SCYA23</name>
</gene>
<sequence>MKVSVAALSCLMLVTALGSQARVTKDAETEFMMSKLPLENPVLLDRFHATSADCCISYTPRSIPCSLLESYFETNSECSKPGVIFLTKKGRRFCANPSDKQVQVCMRMLKLDTRIKTRKN</sequence>